<gene>
    <name type="primary">PRM1</name>
</gene>
<accession>Q9GLQ4</accession>
<evidence type="ECO:0000256" key="1">
    <source>
        <dbReference type="SAM" id="MobiDB-lite"/>
    </source>
</evidence>
<evidence type="ECO:0000305" key="2"/>
<sequence>MARYRHSRSRSRSRYRRRRRRRSRYRSRRRXYRGRRRRRSRRGRRRRGYSRRRYSRRRRRRY</sequence>
<dbReference type="EMBL" id="AF187539">
    <property type="protein sequence ID" value="AAG27956.1"/>
    <property type="molecule type" value="Genomic_DNA"/>
</dbReference>
<dbReference type="GO" id="GO:0000786">
    <property type="term" value="C:nucleosome"/>
    <property type="evidence" value="ECO:0007669"/>
    <property type="project" value="UniProtKB-KW"/>
</dbReference>
<dbReference type="GO" id="GO:0005634">
    <property type="term" value="C:nucleus"/>
    <property type="evidence" value="ECO:0007669"/>
    <property type="project" value="UniProtKB-SubCell"/>
</dbReference>
<dbReference type="GO" id="GO:0003677">
    <property type="term" value="F:DNA binding"/>
    <property type="evidence" value="ECO:0007669"/>
    <property type="project" value="UniProtKB-KW"/>
</dbReference>
<dbReference type="GO" id="GO:0030261">
    <property type="term" value="P:chromosome condensation"/>
    <property type="evidence" value="ECO:0007669"/>
    <property type="project" value="UniProtKB-KW"/>
</dbReference>
<dbReference type="GO" id="GO:0035092">
    <property type="term" value="P:sperm DNA condensation"/>
    <property type="evidence" value="ECO:0007669"/>
    <property type="project" value="InterPro"/>
</dbReference>
<dbReference type="InterPro" id="IPR000221">
    <property type="entry name" value="Protamine_P1"/>
</dbReference>
<dbReference type="PROSITE" id="PS00048">
    <property type="entry name" value="PROTAMINE_P1"/>
    <property type="match status" value="1"/>
</dbReference>
<comment type="function">
    <text>Protamines substitute for histones in the chromatin of sperm during the haploid phase of spermatogenesis. They compact sperm DNA into a highly condensed, stable and inactive complex.</text>
</comment>
<comment type="subcellular location">
    <subcellularLocation>
        <location>Nucleus</location>
    </subcellularLocation>
    <subcellularLocation>
        <location>Chromosome</location>
    </subcellularLocation>
</comment>
<comment type="tissue specificity">
    <text>Testis.</text>
</comment>
<comment type="similarity">
    <text evidence="2">Belongs to the protamine P1 family.</text>
</comment>
<feature type="chain" id="PRO_0000191472" description="Sperm protamine P1">
    <location>
        <begin position="1"/>
        <end position="62"/>
    </location>
</feature>
<feature type="region of interest" description="Disordered" evidence="1">
    <location>
        <begin position="1"/>
        <end position="62"/>
    </location>
</feature>
<proteinExistence type="evidence at transcript level"/>
<protein>
    <recommendedName>
        <fullName>Sperm protamine P1</fullName>
    </recommendedName>
</protein>
<name>HSP1_DORVA</name>
<reference key="1">
    <citation type="journal article" date="2000" name="J. Mammal. Evol.">
        <title>Intergeneric relationships among Macropodoidea (Metatheria: Diprotodontia) and the chronicle of kangaroo evolution.</title>
        <authorList>
            <person name="Burk A."/>
            <person name="Springer M.S."/>
        </authorList>
    </citation>
    <scope>NUCLEOTIDE SEQUENCE [GENOMIC DNA]</scope>
</reference>
<organism>
    <name type="scientific">Dorcopsulus vanheurni</name>
    <name type="common">Lesser forest wallaby</name>
    <dbReference type="NCBI Taxonomy" id="69270"/>
    <lineage>
        <taxon>Eukaryota</taxon>
        <taxon>Metazoa</taxon>
        <taxon>Chordata</taxon>
        <taxon>Craniata</taxon>
        <taxon>Vertebrata</taxon>
        <taxon>Euteleostomi</taxon>
        <taxon>Mammalia</taxon>
        <taxon>Metatheria</taxon>
        <taxon>Diprotodontia</taxon>
        <taxon>Macropodidae</taxon>
        <taxon>Dorcopsulus</taxon>
    </lineage>
</organism>
<keyword id="KW-0158">Chromosome</keyword>
<keyword id="KW-0217">Developmental protein</keyword>
<keyword id="KW-0221">Differentiation</keyword>
<keyword id="KW-0226">DNA condensation</keyword>
<keyword id="KW-0238">DNA-binding</keyword>
<keyword id="KW-0544">Nucleosome core</keyword>
<keyword id="KW-0539">Nucleus</keyword>
<keyword id="KW-0744">Spermatogenesis</keyword>